<protein>
    <recommendedName>
        <fullName evidence="1">Protein translocase subunit SecY</fullName>
    </recommendedName>
</protein>
<proteinExistence type="inferred from homology"/>
<sequence length="443" mass="48512">MAKQPGLDFQSAKGGLGELKRRLLFVIGALIVFRIGSFIPIPGIDAAVLAKLLEQQRGTIIEMFNMFSGGALSRASIFALGIMPYISASIIIQLLTVVHPTLAEIKKEGESGRRKISQYTRYGTLVLAIFQSIGIATGLPNMPGMQGLVINPGFAFYFTAVVSLVTGTMFLMWLGEQITERGIGNGISIIIFAGIVAGLPPAIAHTIEQARQGDLHFLVLLLVAVLVFAVTFFVVFVERGQRRIVVNYAKRQQGRRVYAAQSTHLPLKVNMAGVIPAIFASSIILFPATIASWFGGGTGWNWLTTISLYLQPGQPLYVLLYASAIIFFCFFYTALVFNPRETADNLKKSGAFVPGIRPGEQTAKYIDKVMTRLTLVGALYITFICLIPEFMRDAMKVPFYFGGTSLLIVVVVIMDFMAQVQTLMMSSQYESALKKANLKGYGR</sequence>
<keyword id="KW-0997">Cell inner membrane</keyword>
<keyword id="KW-1003">Cell membrane</keyword>
<keyword id="KW-0472">Membrane</keyword>
<keyword id="KW-0653">Protein transport</keyword>
<keyword id="KW-1185">Reference proteome</keyword>
<keyword id="KW-0811">Translocation</keyword>
<keyword id="KW-0812">Transmembrane</keyword>
<keyword id="KW-1133">Transmembrane helix</keyword>
<keyword id="KW-0813">Transport</keyword>
<dbReference type="EMBL" id="AE014075">
    <property type="protein sequence ID" value="AAN82499.1"/>
    <property type="molecule type" value="Genomic_DNA"/>
</dbReference>
<dbReference type="RefSeq" id="WP_001118861.1">
    <property type="nucleotide sequence ID" value="NZ_CP051263.1"/>
</dbReference>
<dbReference type="SMR" id="P0AGA3"/>
<dbReference type="STRING" id="199310.c4061"/>
<dbReference type="GeneID" id="86862302"/>
<dbReference type="KEGG" id="ecc:c4061"/>
<dbReference type="eggNOG" id="COG0201">
    <property type="taxonomic scope" value="Bacteria"/>
</dbReference>
<dbReference type="HOGENOM" id="CLU_030313_0_2_6"/>
<dbReference type="BioCyc" id="ECOL199310:C4061-MONOMER"/>
<dbReference type="Proteomes" id="UP000001410">
    <property type="component" value="Chromosome"/>
</dbReference>
<dbReference type="GO" id="GO:0005886">
    <property type="term" value="C:plasma membrane"/>
    <property type="evidence" value="ECO:0007669"/>
    <property type="project" value="UniProtKB-SubCell"/>
</dbReference>
<dbReference type="GO" id="GO:0065002">
    <property type="term" value="P:intracellular protein transmembrane transport"/>
    <property type="evidence" value="ECO:0007669"/>
    <property type="project" value="UniProtKB-UniRule"/>
</dbReference>
<dbReference type="GO" id="GO:0006605">
    <property type="term" value="P:protein targeting"/>
    <property type="evidence" value="ECO:0007669"/>
    <property type="project" value="UniProtKB-UniRule"/>
</dbReference>
<dbReference type="GO" id="GO:0043952">
    <property type="term" value="P:protein transport by the Sec complex"/>
    <property type="evidence" value="ECO:0007669"/>
    <property type="project" value="UniProtKB-UniRule"/>
</dbReference>
<dbReference type="FunFam" id="1.10.3370.10:FF:000001">
    <property type="entry name" value="Preprotein translocase subunit SecY"/>
    <property type="match status" value="1"/>
</dbReference>
<dbReference type="Gene3D" id="1.10.3370.10">
    <property type="entry name" value="SecY subunit domain"/>
    <property type="match status" value="1"/>
</dbReference>
<dbReference type="HAMAP" id="MF_01465">
    <property type="entry name" value="SecY"/>
    <property type="match status" value="1"/>
</dbReference>
<dbReference type="InterPro" id="IPR026593">
    <property type="entry name" value="SecY"/>
</dbReference>
<dbReference type="InterPro" id="IPR002208">
    <property type="entry name" value="SecY/SEC61-alpha"/>
</dbReference>
<dbReference type="InterPro" id="IPR030659">
    <property type="entry name" value="SecY_CS"/>
</dbReference>
<dbReference type="InterPro" id="IPR023201">
    <property type="entry name" value="SecY_dom_sf"/>
</dbReference>
<dbReference type="NCBIfam" id="TIGR00967">
    <property type="entry name" value="3a0501s007"/>
    <property type="match status" value="1"/>
</dbReference>
<dbReference type="PANTHER" id="PTHR10906">
    <property type="entry name" value="SECY/SEC61-ALPHA FAMILY MEMBER"/>
    <property type="match status" value="1"/>
</dbReference>
<dbReference type="Pfam" id="PF00344">
    <property type="entry name" value="SecY"/>
    <property type="match status" value="1"/>
</dbReference>
<dbReference type="PIRSF" id="PIRSF004557">
    <property type="entry name" value="SecY"/>
    <property type="match status" value="1"/>
</dbReference>
<dbReference type="PRINTS" id="PR00303">
    <property type="entry name" value="SECYTRNLCASE"/>
</dbReference>
<dbReference type="SUPFAM" id="SSF103491">
    <property type="entry name" value="Preprotein translocase SecY subunit"/>
    <property type="match status" value="1"/>
</dbReference>
<dbReference type="PROSITE" id="PS00755">
    <property type="entry name" value="SECY_1"/>
    <property type="match status" value="1"/>
</dbReference>
<dbReference type="PROSITE" id="PS00756">
    <property type="entry name" value="SECY_2"/>
    <property type="match status" value="1"/>
</dbReference>
<organism>
    <name type="scientific">Escherichia coli O6:H1 (strain CFT073 / ATCC 700928 / UPEC)</name>
    <dbReference type="NCBI Taxonomy" id="199310"/>
    <lineage>
        <taxon>Bacteria</taxon>
        <taxon>Pseudomonadati</taxon>
        <taxon>Pseudomonadota</taxon>
        <taxon>Gammaproteobacteria</taxon>
        <taxon>Enterobacterales</taxon>
        <taxon>Enterobacteriaceae</taxon>
        <taxon>Escherichia</taxon>
    </lineage>
</organism>
<evidence type="ECO:0000255" key="1">
    <source>
        <dbReference type="HAMAP-Rule" id="MF_01465"/>
    </source>
</evidence>
<accession>P0AGA3</accession>
<accession>P03844</accession>
<reference key="1">
    <citation type="journal article" date="2002" name="Proc. Natl. Acad. Sci. U.S.A.">
        <title>Extensive mosaic structure revealed by the complete genome sequence of uropathogenic Escherichia coli.</title>
        <authorList>
            <person name="Welch R.A."/>
            <person name="Burland V."/>
            <person name="Plunkett G. III"/>
            <person name="Redford P."/>
            <person name="Roesch P."/>
            <person name="Rasko D."/>
            <person name="Buckles E.L."/>
            <person name="Liou S.-R."/>
            <person name="Boutin A."/>
            <person name="Hackett J."/>
            <person name="Stroud D."/>
            <person name="Mayhew G.F."/>
            <person name="Rose D.J."/>
            <person name="Zhou S."/>
            <person name="Schwartz D.C."/>
            <person name="Perna N.T."/>
            <person name="Mobley H.L.T."/>
            <person name="Donnenberg M.S."/>
            <person name="Blattner F.R."/>
        </authorList>
    </citation>
    <scope>NUCLEOTIDE SEQUENCE [LARGE SCALE GENOMIC DNA]</scope>
    <source>
        <strain>CFT073 / ATCC 700928 / UPEC</strain>
    </source>
</reference>
<feature type="chain" id="PRO_0000131723" description="Protein translocase subunit SecY">
    <location>
        <begin position="1"/>
        <end position="443"/>
    </location>
</feature>
<feature type="transmembrane region" description="Helical" evidence="1">
    <location>
        <begin position="24"/>
        <end position="44"/>
    </location>
</feature>
<feature type="transmembrane region" description="Helical" evidence="1">
    <location>
        <begin position="77"/>
        <end position="97"/>
    </location>
</feature>
<feature type="transmembrane region" description="Helical" evidence="1">
    <location>
        <begin position="125"/>
        <end position="145"/>
    </location>
</feature>
<feature type="transmembrane region" description="Helical" evidence="1">
    <location>
        <begin position="154"/>
        <end position="174"/>
    </location>
</feature>
<feature type="transmembrane region" description="Helical" evidence="1">
    <location>
        <begin position="183"/>
        <end position="203"/>
    </location>
</feature>
<feature type="transmembrane region" description="Helical" evidence="1">
    <location>
        <begin position="217"/>
        <end position="237"/>
    </location>
</feature>
<feature type="transmembrane region" description="Helical" evidence="1">
    <location>
        <begin position="274"/>
        <end position="294"/>
    </location>
</feature>
<feature type="transmembrane region" description="Helical" evidence="1">
    <location>
        <begin position="317"/>
        <end position="337"/>
    </location>
</feature>
<feature type="transmembrane region" description="Helical" evidence="1">
    <location>
        <begin position="370"/>
        <end position="390"/>
    </location>
</feature>
<feature type="transmembrane region" description="Helical" evidence="1">
    <location>
        <begin position="397"/>
        <end position="417"/>
    </location>
</feature>
<comment type="function">
    <text evidence="1">The central subunit of the protein translocation channel SecYEG. Consists of two halves formed by TMs 1-5 and 6-10. These two domains form a lateral gate at the front which open onto the bilayer between TMs 2 and 7, and are clamped together by SecE at the back. The channel is closed by both a pore ring composed of hydrophobic SecY resides and a short helix (helix 2A) on the extracellular side of the membrane which forms a plug. The plug probably moves laterally to allow the channel to open. The ring and the pore may move independently.</text>
</comment>
<comment type="subunit">
    <text evidence="1">Component of the Sec protein translocase complex. Heterotrimer consisting of SecY, SecE and SecG subunits. The heterotrimers can form oligomers, although 1 heterotrimer is thought to be able to translocate proteins. Interacts with the ribosome. Interacts with SecDF, and other proteins may be involved. Interacts with SecA.</text>
</comment>
<comment type="subcellular location">
    <subcellularLocation>
        <location evidence="1">Cell inner membrane</location>
        <topology evidence="1">Multi-pass membrane protein</topology>
    </subcellularLocation>
</comment>
<comment type="similarity">
    <text evidence="1">Belongs to the SecY/SEC61-alpha family.</text>
</comment>
<gene>
    <name evidence="1" type="primary">secY</name>
    <name type="ordered locus">c4061</name>
</gene>
<name>SECY_ECOL6</name>